<proteinExistence type="inferred from homology"/>
<geneLocation type="chloroplast"/>
<organism>
    <name type="scientific">Oenothera elata subsp. hookeri</name>
    <name type="common">Hooker's evening primrose</name>
    <name type="synonym">Oenothera hookeri</name>
    <dbReference type="NCBI Taxonomy" id="85636"/>
    <lineage>
        <taxon>Eukaryota</taxon>
        <taxon>Viridiplantae</taxon>
        <taxon>Streptophyta</taxon>
        <taxon>Embryophyta</taxon>
        <taxon>Tracheophyta</taxon>
        <taxon>Spermatophyta</taxon>
        <taxon>Magnoliopsida</taxon>
        <taxon>eudicotyledons</taxon>
        <taxon>Gunneridae</taxon>
        <taxon>Pentapetalae</taxon>
        <taxon>rosids</taxon>
        <taxon>malvids</taxon>
        <taxon>Myrtales</taxon>
        <taxon>Onagraceae</taxon>
        <taxon>Onagroideae</taxon>
        <taxon>Onagreae</taxon>
        <taxon>Oenothera</taxon>
    </lineage>
</organism>
<comment type="function">
    <text evidence="2">Apoprotein for the two 4Fe-4S centers FA and FB of photosystem I (PSI); essential for photochemical activity. FB is the terminal electron acceptor of PSI, donating electrons to ferredoxin. The C-terminus interacts with PsaA/B/D and helps assemble the protein into the PSI complex. Required for binding of PsaD and PsaE to PSI. PSI is a plastocyanin-ferredoxin oxidoreductase, converting photonic excitation into a charge separation, which transfers an electron from the donor P700 chlorophyll pair to the spectroscopically characterized acceptors A0, A1, FX, FA and FB in turn.</text>
</comment>
<comment type="catalytic activity">
    <reaction evidence="2">
        <text>reduced [plastocyanin] + hnu + oxidized [2Fe-2S]-[ferredoxin] = oxidized [plastocyanin] + reduced [2Fe-2S]-[ferredoxin]</text>
        <dbReference type="Rhea" id="RHEA:30407"/>
        <dbReference type="Rhea" id="RHEA-COMP:10000"/>
        <dbReference type="Rhea" id="RHEA-COMP:10001"/>
        <dbReference type="Rhea" id="RHEA-COMP:10039"/>
        <dbReference type="Rhea" id="RHEA-COMP:10040"/>
        <dbReference type="ChEBI" id="CHEBI:29036"/>
        <dbReference type="ChEBI" id="CHEBI:30212"/>
        <dbReference type="ChEBI" id="CHEBI:33737"/>
        <dbReference type="ChEBI" id="CHEBI:33738"/>
        <dbReference type="ChEBI" id="CHEBI:49552"/>
        <dbReference type="EC" id="1.97.1.12"/>
    </reaction>
</comment>
<comment type="cofactor">
    <cofactor evidence="2">
        <name>[4Fe-4S] cluster</name>
        <dbReference type="ChEBI" id="CHEBI:49883"/>
    </cofactor>
    <text evidence="2">Binds 2 [4Fe-4S] clusters. Cluster 2 is most probably the spectroscopically characterized electron acceptor FA and cluster 1 is most probably FB.</text>
</comment>
<comment type="subunit">
    <text evidence="2">The eukaryotic PSI reaction center is composed of at least 11 subunits.</text>
</comment>
<comment type="subcellular location">
    <subcellularLocation>
        <location evidence="2">Plastid</location>
        <location evidence="2">Chloroplast thylakoid membrane</location>
        <topology evidence="2">Peripheral membrane protein</topology>
        <orientation evidence="2">Stromal side</orientation>
    </subcellularLocation>
</comment>
<protein>
    <recommendedName>
        <fullName evidence="2">Photosystem I iron-sulfur center</fullName>
        <ecNumber evidence="2">1.97.1.12</ecNumber>
    </recommendedName>
    <alternativeName>
        <fullName evidence="2">9 kDa polypeptide</fullName>
    </alternativeName>
    <alternativeName>
        <fullName evidence="2">PSI-C</fullName>
    </alternativeName>
    <alternativeName>
        <fullName evidence="2">Photosystem I subunit VII</fullName>
    </alternativeName>
    <alternativeName>
        <fullName evidence="2">PsaC</fullName>
    </alternativeName>
</protein>
<dbReference type="EC" id="1.97.1.12" evidence="2"/>
<dbReference type="EMBL" id="AJ271079">
    <property type="protein sequence ID" value="CAB67221.1"/>
    <property type="molecule type" value="Genomic_DNA"/>
</dbReference>
<dbReference type="RefSeq" id="NP_084752.1">
    <property type="nucleotide sequence ID" value="NC_002693.2"/>
</dbReference>
<dbReference type="SMR" id="P62093"/>
<dbReference type="GeneID" id="802724"/>
<dbReference type="GO" id="GO:0009535">
    <property type="term" value="C:chloroplast thylakoid membrane"/>
    <property type="evidence" value="ECO:0007669"/>
    <property type="project" value="UniProtKB-SubCell"/>
</dbReference>
<dbReference type="GO" id="GO:0009522">
    <property type="term" value="C:photosystem I"/>
    <property type="evidence" value="ECO:0007669"/>
    <property type="project" value="UniProtKB-KW"/>
</dbReference>
<dbReference type="GO" id="GO:0051539">
    <property type="term" value="F:4 iron, 4 sulfur cluster binding"/>
    <property type="evidence" value="ECO:0007669"/>
    <property type="project" value="UniProtKB-KW"/>
</dbReference>
<dbReference type="GO" id="GO:0009055">
    <property type="term" value="F:electron transfer activity"/>
    <property type="evidence" value="ECO:0007669"/>
    <property type="project" value="UniProtKB-UniRule"/>
</dbReference>
<dbReference type="GO" id="GO:0046872">
    <property type="term" value="F:metal ion binding"/>
    <property type="evidence" value="ECO:0007669"/>
    <property type="project" value="UniProtKB-KW"/>
</dbReference>
<dbReference type="GO" id="GO:0016491">
    <property type="term" value="F:oxidoreductase activity"/>
    <property type="evidence" value="ECO:0007669"/>
    <property type="project" value="UniProtKB-KW"/>
</dbReference>
<dbReference type="GO" id="GO:0009773">
    <property type="term" value="P:photosynthetic electron transport in photosystem I"/>
    <property type="evidence" value="ECO:0007669"/>
    <property type="project" value="InterPro"/>
</dbReference>
<dbReference type="FunFam" id="3.30.70.20:FF:000001">
    <property type="entry name" value="Photosystem I iron-sulfur center"/>
    <property type="match status" value="1"/>
</dbReference>
<dbReference type="Gene3D" id="3.30.70.20">
    <property type="match status" value="1"/>
</dbReference>
<dbReference type="HAMAP" id="MF_01303">
    <property type="entry name" value="PSI_PsaC"/>
    <property type="match status" value="1"/>
</dbReference>
<dbReference type="InterPro" id="IPR017896">
    <property type="entry name" value="4Fe4S_Fe-S-bd"/>
</dbReference>
<dbReference type="InterPro" id="IPR017900">
    <property type="entry name" value="4Fe4S_Fe_S_CS"/>
</dbReference>
<dbReference type="InterPro" id="IPR050157">
    <property type="entry name" value="PSI_iron-sulfur_center"/>
</dbReference>
<dbReference type="InterPro" id="IPR017491">
    <property type="entry name" value="PSI_PsaC"/>
</dbReference>
<dbReference type="NCBIfam" id="TIGR03048">
    <property type="entry name" value="PS_I_psaC"/>
    <property type="match status" value="1"/>
</dbReference>
<dbReference type="PANTHER" id="PTHR24960:SF79">
    <property type="entry name" value="PHOTOSYSTEM I IRON-SULFUR CENTER"/>
    <property type="match status" value="1"/>
</dbReference>
<dbReference type="PANTHER" id="PTHR24960">
    <property type="entry name" value="PHOTOSYSTEM I IRON-SULFUR CENTER-RELATED"/>
    <property type="match status" value="1"/>
</dbReference>
<dbReference type="Pfam" id="PF14697">
    <property type="entry name" value="Fer4_21"/>
    <property type="match status" value="1"/>
</dbReference>
<dbReference type="SUPFAM" id="SSF54862">
    <property type="entry name" value="4Fe-4S ferredoxins"/>
    <property type="match status" value="1"/>
</dbReference>
<dbReference type="PROSITE" id="PS00198">
    <property type="entry name" value="4FE4S_FER_1"/>
    <property type="match status" value="2"/>
</dbReference>
<dbReference type="PROSITE" id="PS51379">
    <property type="entry name" value="4FE4S_FER_2"/>
    <property type="match status" value="2"/>
</dbReference>
<evidence type="ECO:0000250" key="1"/>
<evidence type="ECO:0000255" key="2">
    <source>
        <dbReference type="HAMAP-Rule" id="MF_01303"/>
    </source>
</evidence>
<sequence length="81" mass="9038">MSHSVKIYDTCIGCTQCVRACPTDVLEMIPWDGCKAKQIASAPRTEDCVGCKRCESACPTDFLSVRVYLWHETTRSMGLAY</sequence>
<feature type="initiator methionine" description="Removed" evidence="1">
    <location>
        <position position="1"/>
    </location>
</feature>
<feature type="chain" id="PRO_0000061993" description="Photosystem I iron-sulfur center">
    <location>
        <begin position="2"/>
        <end position="81"/>
    </location>
</feature>
<feature type="domain" description="4Fe-4S ferredoxin-type 1" evidence="2">
    <location>
        <begin position="2"/>
        <end position="31"/>
    </location>
</feature>
<feature type="domain" description="4Fe-4S ferredoxin-type 2" evidence="2">
    <location>
        <begin position="39"/>
        <end position="68"/>
    </location>
</feature>
<feature type="binding site" evidence="2">
    <location>
        <position position="11"/>
    </location>
    <ligand>
        <name>[4Fe-4S] cluster</name>
        <dbReference type="ChEBI" id="CHEBI:49883"/>
        <label>1</label>
    </ligand>
</feature>
<feature type="binding site" evidence="2">
    <location>
        <position position="14"/>
    </location>
    <ligand>
        <name>[4Fe-4S] cluster</name>
        <dbReference type="ChEBI" id="CHEBI:49883"/>
        <label>1</label>
    </ligand>
</feature>
<feature type="binding site" evidence="2">
    <location>
        <position position="17"/>
    </location>
    <ligand>
        <name>[4Fe-4S] cluster</name>
        <dbReference type="ChEBI" id="CHEBI:49883"/>
        <label>1</label>
    </ligand>
</feature>
<feature type="binding site" evidence="2">
    <location>
        <position position="21"/>
    </location>
    <ligand>
        <name>[4Fe-4S] cluster</name>
        <dbReference type="ChEBI" id="CHEBI:49883"/>
        <label>2</label>
    </ligand>
</feature>
<feature type="binding site" evidence="2">
    <location>
        <position position="48"/>
    </location>
    <ligand>
        <name>[4Fe-4S] cluster</name>
        <dbReference type="ChEBI" id="CHEBI:49883"/>
        <label>2</label>
    </ligand>
</feature>
<feature type="binding site" evidence="2">
    <location>
        <position position="51"/>
    </location>
    <ligand>
        <name>[4Fe-4S] cluster</name>
        <dbReference type="ChEBI" id="CHEBI:49883"/>
        <label>2</label>
    </ligand>
</feature>
<feature type="binding site" evidence="2">
    <location>
        <position position="54"/>
    </location>
    <ligand>
        <name>[4Fe-4S] cluster</name>
        <dbReference type="ChEBI" id="CHEBI:49883"/>
        <label>2</label>
    </ligand>
</feature>
<feature type="binding site" evidence="2">
    <location>
        <position position="58"/>
    </location>
    <ligand>
        <name>[4Fe-4S] cluster</name>
        <dbReference type="ChEBI" id="CHEBI:49883"/>
        <label>1</label>
    </ligand>
</feature>
<keyword id="KW-0004">4Fe-4S</keyword>
<keyword id="KW-0150">Chloroplast</keyword>
<keyword id="KW-0249">Electron transport</keyword>
<keyword id="KW-0408">Iron</keyword>
<keyword id="KW-0411">Iron-sulfur</keyword>
<keyword id="KW-0472">Membrane</keyword>
<keyword id="KW-0479">Metal-binding</keyword>
<keyword id="KW-0560">Oxidoreductase</keyword>
<keyword id="KW-0602">Photosynthesis</keyword>
<keyword id="KW-0603">Photosystem I</keyword>
<keyword id="KW-0934">Plastid</keyword>
<keyword id="KW-0677">Repeat</keyword>
<keyword id="KW-0793">Thylakoid</keyword>
<keyword id="KW-0813">Transport</keyword>
<name>PSAC_OENEH</name>
<accession>P62093</accession>
<accession>P07136</accession>
<accession>P25252</accession>
<accession>Q9MRU0</accession>
<accession>Q9T2J4</accession>
<reference key="1">
    <citation type="journal article" date="2000" name="Mol. Gen. Genet.">
        <title>Complete nucleotide sequence of the Oenothera elata plastid chromosome, representing plastome I of the five distinguishable Euoenothera plastomes.</title>
        <authorList>
            <person name="Hupfer H."/>
            <person name="Swiatek M."/>
            <person name="Hornung S."/>
            <person name="Herrmann R.G."/>
            <person name="Maier R.M."/>
            <person name="Chiu W.-L."/>
            <person name="Sears B."/>
        </authorList>
    </citation>
    <scope>NUCLEOTIDE SEQUENCE [LARGE SCALE GENOMIC DNA]</scope>
    <source>
        <strain>cv. Johansen</strain>
    </source>
</reference>
<gene>
    <name evidence="2" type="primary">psaC</name>
</gene>